<keyword id="KW-0963">Cytoplasm</keyword>
<keyword id="KW-0238">DNA-binding</keyword>
<keyword id="KW-0678">Repressor</keyword>
<keyword id="KW-0804">Transcription</keyword>
<keyword id="KW-0805">Transcription regulation</keyword>
<dbReference type="EMBL" id="CP000026">
    <property type="protein sequence ID" value="AAV78733.1"/>
    <property type="molecule type" value="Genomic_DNA"/>
</dbReference>
<dbReference type="RefSeq" id="WP_000019953.1">
    <property type="nucleotide sequence ID" value="NC_006511.1"/>
</dbReference>
<dbReference type="SMR" id="Q5PEQ5"/>
<dbReference type="KEGG" id="spt:SPA2890"/>
<dbReference type="HOGENOM" id="CLU_130332_3_0_6"/>
<dbReference type="Proteomes" id="UP000008185">
    <property type="component" value="Chromosome"/>
</dbReference>
<dbReference type="GO" id="GO:0005737">
    <property type="term" value="C:cytoplasm"/>
    <property type="evidence" value="ECO:0007669"/>
    <property type="project" value="UniProtKB-SubCell"/>
</dbReference>
<dbReference type="GO" id="GO:0003677">
    <property type="term" value="F:DNA binding"/>
    <property type="evidence" value="ECO:0007669"/>
    <property type="project" value="UniProtKB-KW"/>
</dbReference>
<dbReference type="GO" id="GO:0046872">
    <property type="term" value="F:metal ion binding"/>
    <property type="evidence" value="ECO:0007669"/>
    <property type="project" value="InterPro"/>
</dbReference>
<dbReference type="GO" id="GO:0045892">
    <property type="term" value="P:negative regulation of DNA-templated transcription"/>
    <property type="evidence" value="ECO:0007669"/>
    <property type="project" value="UniProtKB-ARBA"/>
</dbReference>
<dbReference type="CDD" id="cd10153">
    <property type="entry name" value="RcnR-FrmR-like_DUF156"/>
    <property type="match status" value="1"/>
</dbReference>
<dbReference type="FunFam" id="1.20.58.1000:FF:000001">
    <property type="entry name" value="Transcriptional repressor RcnR"/>
    <property type="match status" value="1"/>
</dbReference>
<dbReference type="Gene3D" id="1.20.58.1000">
    <property type="entry name" value="Metal-sensitive repressor, helix protomer"/>
    <property type="match status" value="1"/>
</dbReference>
<dbReference type="InterPro" id="IPR003735">
    <property type="entry name" value="Metal_Tscrpt_repr"/>
</dbReference>
<dbReference type="InterPro" id="IPR038390">
    <property type="entry name" value="Metal_Tscrpt_repr_sf"/>
</dbReference>
<dbReference type="NCBIfam" id="NF011613">
    <property type="entry name" value="PRK15039.1"/>
    <property type="match status" value="1"/>
</dbReference>
<dbReference type="PANTHER" id="PTHR33677">
    <property type="entry name" value="TRANSCRIPTIONAL REPRESSOR FRMR-RELATED"/>
    <property type="match status" value="1"/>
</dbReference>
<dbReference type="PANTHER" id="PTHR33677:SF1">
    <property type="entry name" value="TRANSCRIPTIONAL REPRESSOR RCNR"/>
    <property type="match status" value="1"/>
</dbReference>
<dbReference type="Pfam" id="PF02583">
    <property type="entry name" value="Trns_repr_metal"/>
    <property type="match status" value="1"/>
</dbReference>
<protein>
    <recommendedName>
        <fullName>Transcriptional repressor RcnR</fullName>
    </recommendedName>
</protein>
<accession>Q5PEQ5</accession>
<sequence length="90" mass="10208">MSHTIRDKQKLKARTSKIQGQVIALKKMLDEPHECAAVLQQIAAIRGAVNGLMREVIKGHLTEHIVHQSDEARREEDLDVILKVLDSYIK</sequence>
<reference key="1">
    <citation type="journal article" date="2004" name="Nat. Genet.">
        <title>Comparison of genome degradation in Paratyphi A and Typhi, human-restricted serovars of Salmonella enterica that cause typhoid.</title>
        <authorList>
            <person name="McClelland M."/>
            <person name="Sanderson K.E."/>
            <person name="Clifton S.W."/>
            <person name="Latreille P."/>
            <person name="Porwollik S."/>
            <person name="Sabo A."/>
            <person name="Meyer R."/>
            <person name="Bieri T."/>
            <person name="Ozersky P."/>
            <person name="McLellan M."/>
            <person name="Harkins C.R."/>
            <person name="Wang C."/>
            <person name="Nguyen C."/>
            <person name="Berghoff A."/>
            <person name="Elliott G."/>
            <person name="Kohlberg S."/>
            <person name="Strong C."/>
            <person name="Du F."/>
            <person name="Carter J."/>
            <person name="Kremizki C."/>
            <person name="Layman D."/>
            <person name="Leonard S."/>
            <person name="Sun H."/>
            <person name="Fulton L."/>
            <person name="Nash W."/>
            <person name="Miner T."/>
            <person name="Minx P."/>
            <person name="Delehaunty K."/>
            <person name="Fronick C."/>
            <person name="Magrini V."/>
            <person name="Nhan M."/>
            <person name="Warren W."/>
            <person name="Florea L."/>
            <person name="Spieth J."/>
            <person name="Wilson R.K."/>
        </authorList>
    </citation>
    <scope>NUCLEOTIDE SEQUENCE [LARGE SCALE GENOMIC DNA]</scope>
    <source>
        <strain>ATCC 9150 / SARB42</strain>
    </source>
</reference>
<name>RCNR_SALPA</name>
<evidence type="ECO:0000250" key="1"/>
<evidence type="ECO:0000305" key="2"/>
<feature type="chain" id="PRO_0000332700" description="Transcriptional repressor RcnR">
    <location>
        <begin position="1"/>
        <end position="90"/>
    </location>
</feature>
<organism>
    <name type="scientific">Salmonella paratyphi A (strain ATCC 9150 / SARB42)</name>
    <dbReference type="NCBI Taxonomy" id="295319"/>
    <lineage>
        <taxon>Bacteria</taxon>
        <taxon>Pseudomonadati</taxon>
        <taxon>Pseudomonadota</taxon>
        <taxon>Gammaproteobacteria</taxon>
        <taxon>Enterobacterales</taxon>
        <taxon>Enterobacteriaceae</taxon>
        <taxon>Salmonella</taxon>
    </lineage>
</organism>
<proteinExistence type="inferred from homology"/>
<comment type="function">
    <text evidence="1">Repressor of rcnA expression. Acts by binding specifically to the rcnA promoter in the absence of nickel and cobalt. In the presence of one of these metals, it has a weaker affinity for rcnA promoter (By similarity).</text>
</comment>
<comment type="subcellular location">
    <subcellularLocation>
        <location evidence="2">Cytoplasm</location>
    </subcellularLocation>
</comment>
<comment type="similarity">
    <text evidence="2">Belongs to the FrmR/RcnR family.</text>
</comment>
<gene>
    <name type="primary">rcnR</name>
    <name type="ordered locus">SPA2890</name>
</gene>